<accession>B5QUG1</accession>
<protein>
    <recommendedName>
        <fullName evidence="1">Large ribosomal subunit protein bL19</fullName>
    </recommendedName>
    <alternativeName>
        <fullName evidence="2">50S ribosomal protein L19</fullName>
    </alternativeName>
</protein>
<proteinExistence type="inferred from homology"/>
<gene>
    <name evidence="1" type="primary">rplS</name>
    <name type="ordered locus">SEN2594</name>
</gene>
<name>RL19_SALEP</name>
<evidence type="ECO:0000255" key="1">
    <source>
        <dbReference type="HAMAP-Rule" id="MF_00402"/>
    </source>
</evidence>
<evidence type="ECO:0000305" key="2"/>
<organism>
    <name type="scientific">Salmonella enteritidis PT4 (strain P125109)</name>
    <dbReference type="NCBI Taxonomy" id="550537"/>
    <lineage>
        <taxon>Bacteria</taxon>
        <taxon>Pseudomonadati</taxon>
        <taxon>Pseudomonadota</taxon>
        <taxon>Gammaproteobacteria</taxon>
        <taxon>Enterobacterales</taxon>
        <taxon>Enterobacteriaceae</taxon>
        <taxon>Salmonella</taxon>
    </lineage>
</organism>
<feature type="chain" id="PRO_1000193877" description="Large ribosomal subunit protein bL19">
    <location>
        <begin position="1"/>
        <end position="115"/>
    </location>
</feature>
<keyword id="KW-0687">Ribonucleoprotein</keyword>
<keyword id="KW-0689">Ribosomal protein</keyword>
<sequence length="115" mass="13130">MSNIIKQLEQEQMKQNVPSFRPGDTVEVKVWVVEGTKKRLQAFEGVVIAIRNRGLHSAFTVRKISNGEGVERVFQTHSPVVDSIAVKRRGAVRKAKLYYLRERTGKAARIKERLN</sequence>
<reference key="1">
    <citation type="journal article" date="2008" name="Genome Res.">
        <title>Comparative genome analysis of Salmonella enteritidis PT4 and Salmonella gallinarum 287/91 provides insights into evolutionary and host adaptation pathways.</title>
        <authorList>
            <person name="Thomson N.R."/>
            <person name="Clayton D.J."/>
            <person name="Windhorst D."/>
            <person name="Vernikos G."/>
            <person name="Davidson S."/>
            <person name="Churcher C."/>
            <person name="Quail M.A."/>
            <person name="Stevens M."/>
            <person name="Jones M.A."/>
            <person name="Watson M."/>
            <person name="Barron A."/>
            <person name="Layton A."/>
            <person name="Pickard D."/>
            <person name="Kingsley R.A."/>
            <person name="Bignell A."/>
            <person name="Clark L."/>
            <person name="Harris B."/>
            <person name="Ormond D."/>
            <person name="Abdellah Z."/>
            <person name="Brooks K."/>
            <person name="Cherevach I."/>
            <person name="Chillingworth T."/>
            <person name="Woodward J."/>
            <person name="Norberczak H."/>
            <person name="Lord A."/>
            <person name="Arrowsmith C."/>
            <person name="Jagels K."/>
            <person name="Moule S."/>
            <person name="Mungall K."/>
            <person name="Saunders M."/>
            <person name="Whitehead S."/>
            <person name="Chabalgoity J.A."/>
            <person name="Maskell D."/>
            <person name="Humphreys T."/>
            <person name="Roberts M."/>
            <person name="Barrow P.A."/>
            <person name="Dougan G."/>
            <person name="Parkhill J."/>
        </authorList>
    </citation>
    <scope>NUCLEOTIDE SEQUENCE [LARGE SCALE GENOMIC DNA]</scope>
    <source>
        <strain>P125109</strain>
    </source>
</reference>
<comment type="function">
    <text evidence="1">This protein is located at the 30S-50S ribosomal subunit interface and may play a role in the structure and function of the aminoacyl-tRNA binding site.</text>
</comment>
<comment type="similarity">
    <text evidence="1">Belongs to the bacterial ribosomal protein bL19 family.</text>
</comment>
<dbReference type="EMBL" id="AM933172">
    <property type="protein sequence ID" value="CAR34176.1"/>
    <property type="molecule type" value="Genomic_DNA"/>
</dbReference>
<dbReference type="RefSeq" id="WP_000065257.1">
    <property type="nucleotide sequence ID" value="NC_011294.1"/>
</dbReference>
<dbReference type="SMR" id="B5QUG1"/>
<dbReference type="KEGG" id="set:SEN2594"/>
<dbReference type="HOGENOM" id="CLU_103507_2_1_6"/>
<dbReference type="Proteomes" id="UP000000613">
    <property type="component" value="Chromosome"/>
</dbReference>
<dbReference type="GO" id="GO:0022625">
    <property type="term" value="C:cytosolic large ribosomal subunit"/>
    <property type="evidence" value="ECO:0007669"/>
    <property type="project" value="TreeGrafter"/>
</dbReference>
<dbReference type="GO" id="GO:0003735">
    <property type="term" value="F:structural constituent of ribosome"/>
    <property type="evidence" value="ECO:0007669"/>
    <property type="project" value="InterPro"/>
</dbReference>
<dbReference type="GO" id="GO:0006412">
    <property type="term" value="P:translation"/>
    <property type="evidence" value="ECO:0007669"/>
    <property type="project" value="UniProtKB-UniRule"/>
</dbReference>
<dbReference type="FunFam" id="2.30.30.790:FF:000001">
    <property type="entry name" value="50S ribosomal protein L19"/>
    <property type="match status" value="1"/>
</dbReference>
<dbReference type="Gene3D" id="2.30.30.790">
    <property type="match status" value="1"/>
</dbReference>
<dbReference type="HAMAP" id="MF_00402">
    <property type="entry name" value="Ribosomal_bL19"/>
    <property type="match status" value="1"/>
</dbReference>
<dbReference type="InterPro" id="IPR001857">
    <property type="entry name" value="Ribosomal_bL19"/>
</dbReference>
<dbReference type="InterPro" id="IPR018257">
    <property type="entry name" value="Ribosomal_bL19_CS"/>
</dbReference>
<dbReference type="InterPro" id="IPR038657">
    <property type="entry name" value="Ribosomal_bL19_sf"/>
</dbReference>
<dbReference type="InterPro" id="IPR008991">
    <property type="entry name" value="Translation_prot_SH3-like_sf"/>
</dbReference>
<dbReference type="NCBIfam" id="TIGR01024">
    <property type="entry name" value="rplS_bact"/>
    <property type="match status" value="1"/>
</dbReference>
<dbReference type="PANTHER" id="PTHR15680:SF9">
    <property type="entry name" value="LARGE RIBOSOMAL SUBUNIT PROTEIN BL19M"/>
    <property type="match status" value="1"/>
</dbReference>
<dbReference type="PANTHER" id="PTHR15680">
    <property type="entry name" value="RIBOSOMAL PROTEIN L19"/>
    <property type="match status" value="1"/>
</dbReference>
<dbReference type="Pfam" id="PF01245">
    <property type="entry name" value="Ribosomal_L19"/>
    <property type="match status" value="1"/>
</dbReference>
<dbReference type="PIRSF" id="PIRSF002191">
    <property type="entry name" value="Ribosomal_L19"/>
    <property type="match status" value="1"/>
</dbReference>
<dbReference type="PRINTS" id="PR00061">
    <property type="entry name" value="RIBOSOMALL19"/>
</dbReference>
<dbReference type="SUPFAM" id="SSF50104">
    <property type="entry name" value="Translation proteins SH3-like domain"/>
    <property type="match status" value="1"/>
</dbReference>
<dbReference type="PROSITE" id="PS01015">
    <property type="entry name" value="RIBOSOMAL_L19"/>
    <property type="match status" value="1"/>
</dbReference>